<reference key="1">
    <citation type="journal article" date="2005" name="PLoS Biol.">
        <title>Major structural differences and novel potential virulence mechanisms from the genomes of multiple Campylobacter species.</title>
        <authorList>
            <person name="Fouts D.E."/>
            <person name="Mongodin E.F."/>
            <person name="Mandrell R.E."/>
            <person name="Miller W.G."/>
            <person name="Rasko D.A."/>
            <person name="Ravel J."/>
            <person name="Brinkac L.M."/>
            <person name="DeBoy R.T."/>
            <person name="Parker C.T."/>
            <person name="Daugherty S.C."/>
            <person name="Dodson R.J."/>
            <person name="Durkin A.S."/>
            <person name="Madupu R."/>
            <person name="Sullivan S.A."/>
            <person name="Shetty J.U."/>
            <person name="Ayodeji M.A."/>
            <person name="Shvartsbeyn A."/>
            <person name="Schatz M.C."/>
            <person name="Badger J.H."/>
            <person name="Fraser C.M."/>
            <person name="Nelson K.E."/>
        </authorList>
    </citation>
    <scope>NUCLEOTIDE SEQUENCE [LARGE SCALE GENOMIC DNA]</scope>
    <source>
        <strain>RM1221</strain>
    </source>
</reference>
<organism>
    <name type="scientific">Campylobacter jejuni (strain RM1221)</name>
    <dbReference type="NCBI Taxonomy" id="195099"/>
    <lineage>
        <taxon>Bacteria</taxon>
        <taxon>Pseudomonadati</taxon>
        <taxon>Campylobacterota</taxon>
        <taxon>Epsilonproteobacteria</taxon>
        <taxon>Campylobacterales</taxon>
        <taxon>Campylobacteraceae</taxon>
        <taxon>Campylobacter</taxon>
    </lineage>
</organism>
<sequence>MKNKLDLSLYLVATKGNKSEECFLNTLENAIKGGVSIIQLREKELNAREFYKLGLKVQKLCKSYKIPFLINDRVDIALALDADGVHLGQEDLEAKLARKLLGDEKIIGLSLKKLEQLEFIQGVNYLGCGAIKATPTKESSLLSLELLSQICDKSPIGVVAIGGIDKEALVELKGINLSGVAVVRAIMDAKDAFLAAKELKRKIYENLSLK</sequence>
<protein>
    <recommendedName>
        <fullName evidence="1">Thiamine-phosphate synthase</fullName>
        <shortName evidence="1">TP synthase</shortName>
        <shortName evidence="1">TPS</shortName>
        <ecNumber evidence="1">2.5.1.3</ecNumber>
    </recommendedName>
    <alternativeName>
        <fullName evidence="1">Thiamine-phosphate pyrophosphorylase</fullName>
        <shortName evidence="1">TMP pyrophosphorylase</shortName>
        <shortName evidence="1">TMP-PPase</shortName>
    </alternativeName>
</protein>
<feature type="chain" id="PRO_0000157001" description="Thiamine-phosphate synthase">
    <location>
        <begin position="1"/>
        <end position="210"/>
    </location>
</feature>
<feature type="binding site" evidence="1">
    <location>
        <begin position="39"/>
        <end position="43"/>
    </location>
    <ligand>
        <name>4-amino-2-methyl-5-(diphosphooxymethyl)pyrimidine</name>
        <dbReference type="ChEBI" id="CHEBI:57841"/>
    </ligand>
</feature>
<feature type="binding site" evidence="1">
    <location>
        <position position="71"/>
    </location>
    <ligand>
        <name>4-amino-2-methyl-5-(diphosphooxymethyl)pyrimidine</name>
        <dbReference type="ChEBI" id="CHEBI:57841"/>
    </ligand>
</feature>
<feature type="binding site" evidence="1">
    <location>
        <position position="72"/>
    </location>
    <ligand>
        <name>Mg(2+)</name>
        <dbReference type="ChEBI" id="CHEBI:18420"/>
    </ligand>
</feature>
<feature type="binding site" evidence="1">
    <location>
        <position position="91"/>
    </location>
    <ligand>
        <name>Mg(2+)</name>
        <dbReference type="ChEBI" id="CHEBI:18420"/>
    </ligand>
</feature>
<feature type="binding site" evidence="1">
    <location>
        <position position="110"/>
    </location>
    <ligand>
        <name>4-amino-2-methyl-5-(diphosphooxymethyl)pyrimidine</name>
        <dbReference type="ChEBI" id="CHEBI:57841"/>
    </ligand>
</feature>
<feature type="binding site" evidence="1">
    <location>
        <begin position="134"/>
        <end position="136"/>
    </location>
    <ligand>
        <name>2-[(2R,5Z)-2-carboxy-4-methylthiazol-5(2H)-ylidene]ethyl phosphate</name>
        <dbReference type="ChEBI" id="CHEBI:62899"/>
    </ligand>
</feature>
<feature type="binding site" evidence="1">
    <location>
        <position position="137"/>
    </location>
    <ligand>
        <name>4-amino-2-methyl-5-(diphosphooxymethyl)pyrimidine</name>
        <dbReference type="ChEBI" id="CHEBI:57841"/>
    </ligand>
</feature>
<feature type="binding site" evidence="1">
    <location>
        <position position="163"/>
    </location>
    <ligand>
        <name>2-[(2R,5Z)-2-carboxy-4-methylthiazol-5(2H)-ylidene]ethyl phosphate</name>
        <dbReference type="ChEBI" id="CHEBI:62899"/>
    </ligand>
</feature>
<keyword id="KW-0460">Magnesium</keyword>
<keyword id="KW-0479">Metal-binding</keyword>
<keyword id="KW-0784">Thiamine biosynthesis</keyword>
<keyword id="KW-0808">Transferase</keyword>
<gene>
    <name evidence="1" type="primary">thiE</name>
    <name type="ordered locus">CJE1224</name>
</gene>
<name>THIE_CAMJR</name>
<dbReference type="EC" id="2.5.1.3" evidence="1"/>
<dbReference type="EMBL" id="CP000025">
    <property type="protein sequence ID" value="AAW35546.1"/>
    <property type="molecule type" value="Genomic_DNA"/>
</dbReference>
<dbReference type="RefSeq" id="WP_002852670.1">
    <property type="nucleotide sequence ID" value="NC_003912.7"/>
</dbReference>
<dbReference type="SMR" id="Q5HU23"/>
<dbReference type="KEGG" id="cjr:CJE1224"/>
<dbReference type="HOGENOM" id="CLU_018272_3_2_7"/>
<dbReference type="UniPathway" id="UPA00060">
    <property type="reaction ID" value="UER00141"/>
</dbReference>
<dbReference type="GO" id="GO:0005737">
    <property type="term" value="C:cytoplasm"/>
    <property type="evidence" value="ECO:0007669"/>
    <property type="project" value="TreeGrafter"/>
</dbReference>
<dbReference type="GO" id="GO:0000287">
    <property type="term" value="F:magnesium ion binding"/>
    <property type="evidence" value="ECO:0007669"/>
    <property type="project" value="UniProtKB-UniRule"/>
</dbReference>
<dbReference type="GO" id="GO:0004789">
    <property type="term" value="F:thiamine-phosphate diphosphorylase activity"/>
    <property type="evidence" value="ECO:0007669"/>
    <property type="project" value="UniProtKB-UniRule"/>
</dbReference>
<dbReference type="GO" id="GO:0009228">
    <property type="term" value="P:thiamine biosynthetic process"/>
    <property type="evidence" value="ECO:0007669"/>
    <property type="project" value="UniProtKB-KW"/>
</dbReference>
<dbReference type="GO" id="GO:0009229">
    <property type="term" value="P:thiamine diphosphate biosynthetic process"/>
    <property type="evidence" value="ECO:0007669"/>
    <property type="project" value="UniProtKB-UniRule"/>
</dbReference>
<dbReference type="CDD" id="cd00564">
    <property type="entry name" value="TMP_TenI"/>
    <property type="match status" value="1"/>
</dbReference>
<dbReference type="FunFam" id="3.20.20.70:FF:000096">
    <property type="entry name" value="Thiamine-phosphate synthase"/>
    <property type="match status" value="1"/>
</dbReference>
<dbReference type="Gene3D" id="3.20.20.70">
    <property type="entry name" value="Aldolase class I"/>
    <property type="match status" value="1"/>
</dbReference>
<dbReference type="HAMAP" id="MF_00097">
    <property type="entry name" value="TMP_synthase"/>
    <property type="match status" value="1"/>
</dbReference>
<dbReference type="InterPro" id="IPR013785">
    <property type="entry name" value="Aldolase_TIM"/>
</dbReference>
<dbReference type="InterPro" id="IPR036206">
    <property type="entry name" value="ThiamineP_synth_sf"/>
</dbReference>
<dbReference type="InterPro" id="IPR022998">
    <property type="entry name" value="ThiamineP_synth_TenI"/>
</dbReference>
<dbReference type="InterPro" id="IPR034291">
    <property type="entry name" value="TMP_synthase"/>
</dbReference>
<dbReference type="NCBIfam" id="TIGR00693">
    <property type="entry name" value="thiE"/>
    <property type="match status" value="1"/>
</dbReference>
<dbReference type="PANTHER" id="PTHR20857:SF23">
    <property type="entry name" value="THIAMINE BIOSYNTHETIC BIFUNCTIONAL ENZYME"/>
    <property type="match status" value="1"/>
</dbReference>
<dbReference type="PANTHER" id="PTHR20857">
    <property type="entry name" value="THIAMINE-PHOSPHATE PYROPHOSPHORYLASE"/>
    <property type="match status" value="1"/>
</dbReference>
<dbReference type="Pfam" id="PF02581">
    <property type="entry name" value="TMP-TENI"/>
    <property type="match status" value="1"/>
</dbReference>
<dbReference type="SUPFAM" id="SSF51391">
    <property type="entry name" value="Thiamin phosphate synthase"/>
    <property type="match status" value="1"/>
</dbReference>
<proteinExistence type="inferred from homology"/>
<accession>Q5HU23</accession>
<evidence type="ECO:0000255" key="1">
    <source>
        <dbReference type="HAMAP-Rule" id="MF_00097"/>
    </source>
</evidence>
<comment type="function">
    <text evidence="1">Condenses 4-methyl-5-(beta-hydroxyethyl)thiazole monophosphate (THZ-P) and 2-methyl-4-amino-5-hydroxymethyl pyrimidine pyrophosphate (HMP-PP) to form thiamine monophosphate (TMP).</text>
</comment>
<comment type="catalytic activity">
    <reaction evidence="1">
        <text>2-[(2R,5Z)-2-carboxy-4-methylthiazol-5(2H)-ylidene]ethyl phosphate + 4-amino-2-methyl-5-(diphosphooxymethyl)pyrimidine + 2 H(+) = thiamine phosphate + CO2 + diphosphate</text>
        <dbReference type="Rhea" id="RHEA:47844"/>
        <dbReference type="ChEBI" id="CHEBI:15378"/>
        <dbReference type="ChEBI" id="CHEBI:16526"/>
        <dbReference type="ChEBI" id="CHEBI:33019"/>
        <dbReference type="ChEBI" id="CHEBI:37575"/>
        <dbReference type="ChEBI" id="CHEBI:57841"/>
        <dbReference type="ChEBI" id="CHEBI:62899"/>
        <dbReference type="EC" id="2.5.1.3"/>
    </reaction>
</comment>
<comment type="catalytic activity">
    <reaction evidence="1">
        <text>2-(2-carboxy-4-methylthiazol-5-yl)ethyl phosphate + 4-amino-2-methyl-5-(diphosphooxymethyl)pyrimidine + 2 H(+) = thiamine phosphate + CO2 + diphosphate</text>
        <dbReference type="Rhea" id="RHEA:47848"/>
        <dbReference type="ChEBI" id="CHEBI:15378"/>
        <dbReference type="ChEBI" id="CHEBI:16526"/>
        <dbReference type="ChEBI" id="CHEBI:33019"/>
        <dbReference type="ChEBI" id="CHEBI:37575"/>
        <dbReference type="ChEBI" id="CHEBI:57841"/>
        <dbReference type="ChEBI" id="CHEBI:62890"/>
        <dbReference type="EC" id="2.5.1.3"/>
    </reaction>
</comment>
<comment type="catalytic activity">
    <reaction evidence="1">
        <text>4-methyl-5-(2-phosphooxyethyl)-thiazole + 4-amino-2-methyl-5-(diphosphooxymethyl)pyrimidine + H(+) = thiamine phosphate + diphosphate</text>
        <dbReference type="Rhea" id="RHEA:22328"/>
        <dbReference type="ChEBI" id="CHEBI:15378"/>
        <dbReference type="ChEBI" id="CHEBI:33019"/>
        <dbReference type="ChEBI" id="CHEBI:37575"/>
        <dbReference type="ChEBI" id="CHEBI:57841"/>
        <dbReference type="ChEBI" id="CHEBI:58296"/>
        <dbReference type="EC" id="2.5.1.3"/>
    </reaction>
</comment>
<comment type="cofactor">
    <cofactor evidence="1">
        <name>Mg(2+)</name>
        <dbReference type="ChEBI" id="CHEBI:18420"/>
    </cofactor>
    <text evidence="1">Binds 1 Mg(2+) ion per subunit.</text>
</comment>
<comment type="pathway">
    <text evidence="1">Cofactor biosynthesis; thiamine diphosphate biosynthesis; thiamine phosphate from 4-amino-2-methyl-5-diphosphomethylpyrimidine and 4-methyl-5-(2-phosphoethyl)-thiazole: step 1/1.</text>
</comment>
<comment type="similarity">
    <text evidence="1">Belongs to the thiamine-phosphate synthase family.</text>
</comment>